<evidence type="ECO:0000250" key="1">
    <source>
        <dbReference type="UniProtKB" id="P03081"/>
    </source>
</evidence>
<feature type="chain" id="PRO_0000294070" description="Small t antigen">
    <location>
        <begin position="1"/>
        <end position="191"/>
    </location>
</feature>
<feature type="domain" description="J">
    <location>
        <begin position="12"/>
        <end position="80"/>
    </location>
</feature>
<feature type="zinc finger region" description="C4-type; atypical">
    <location>
        <begin position="117"/>
        <end position="130"/>
    </location>
</feature>
<feature type="zinc finger region" description="H1C3-type; atypical">
    <location>
        <begin position="136"/>
        <end position="157"/>
    </location>
</feature>
<feature type="modified residue" description="N-acetylmethionine; by host" evidence="1">
    <location>
        <position position="1"/>
    </location>
</feature>
<dbReference type="EMBL" id="EF127907">
    <property type="protein sequence ID" value="ABN09925.1"/>
    <property type="molecule type" value="Genomic_DNA"/>
</dbReference>
<dbReference type="SMR" id="P0DOI8"/>
<dbReference type="Proteomes" id="UP000101503">
    <property type="component" value="Genome"/>
</dbReference>
<dbReference type="GO" id="GO:0030430">
    <property type="term" value="C:host cell cytoplasm"/>
    <property type="evidence" value="ECO:0007669"/>
    <property type="project" value="UniProtKB-SubCell"/>
</dbReference>
<dbReference type="GO" id="GO:0042025">
    <property type="term" value="C:host cell nucleus"/>
    <property type="evidence" value="ECO:0007669"/>
    <property type="project" value="UniProtKB-SubCell"/>
</dbReference>
<dbReference type="GO" id="GO:0008270">
    <property type="term" value="F:zinc ion binding"/>
    <property type="evidence" value="ECO:0007669"/>
    <property type="project" value="UniProtKB-KW"/>
</dbReference>
<dbReference type="Gene3D" id="1.10.287.110">
    <property type="entry name" value="DnaJ domain"/>
    <property type="match status" value="1"/>
</dbReference>
<dbReference type="Gene3D" id="1.20.120.1860">
    <property type="entry name" value="Small t-antigen, unique domain"/>
    <property type="match status" value="1"/>
</dbReference>
<dbReference type="InterPro" id="IPR001623">
    <property type="entry name" value="DnaJ_domain"/>
</dbReference>
<dbReference type="InterPro" id="IPR036869">
    <property type="entry name" value="J_dom_sf"/>
</dbReference>
<dbReference type="InterPro" id="IPR003354">
    <property type="entry name" value="Papo_T_antigen"/>
</dbReference>
<dbReference type="InterPro" id="IPR036092">
    <property type="entry name" value="Papo_T_antigensf"/>
</dbReference>
<dbReference type="Pfam" id="PF02380">
    <property type="entry name" value="Papo_T_antigen"/>
    <property type="match status" value="1"/>
</dbReference>
<dbReference type="SMART" id="SM00271">
    <property type="entry name" value="DnaJ"/>
    <property type="match status" value="1"/>
</dbReference>
<dbReference type="SUPFAM" id="SSF46565">
    <property type="entry name" value="Chaperone J-domain"/>
    <property type="match status" value="1"/>
</dbReference>
<dbReference type="SUPFAM" id="SSF161240">
    <property type="entry name" value="T-antigen specific domain-like"/>
    <property type="match status" value="1"/>
</dbReference>
<sequence>MDKTLSREEAKQLMQLLCLDMSCWGNLPLMRRQYLVKCKEYHPDKGGNEESMKLLNSLYLKLQDSVSSVHDLNEEEDNIWQSSQVYCKDLCCNKFRLVGAIYGEYYEAYIMKQWDVCIHGYNHECQCIHCILSKYHKEKYKIYRKPPVWIECYCYKCYREWFFFPISMQTFFFWKVIIFNTEIRAVQPLLR</sequence>
<protein>
    <recommendedName>
        <fullName>Small t antigen</fullName>
        <shortName>ST</shortName>
        <shortName>ST-AG</shortName>
    </recommendedName>
</protein>
<proteinExistence type="inferred from homology"/>
<reference key="1">
    <citation type="journal article" date="2007" name="J. Virol.">
        <title>Identification of a third human polyomavirus.</title>
        <authorList>
            <person name="Allander T."/>
            <person name="Andreasson K."/>
            <person name="Gupta S."/>
            <person name="Bjerkner A."/>
            <person name="Bogdanovic G."/>
            <person name="Persson M.A."/>
            <person name="Dalianis T."/>
            <person name="Ramqvist T."/>
            <person name="Andersson B."/>
        </authorList>
    </citation>
    <scope>NUCLEOTIDE SEQUENCE [GENOMIC DNA]</scope>
</reference>
<accession>P0DOI8</accession>
<accession>A3R4N0</accession>
<accession>A3R4N5</accession>
<accession>A3R4P0</accession>
<keyword id="KW-0007">Acetylation</keyword>
<keyword id="KW-0010">Activator</keyword>
<keyword id="KW-0025">Alternative splicing</keyword>
<keyword id="KW-0244">Early protein</keyword>
<keyword id="KW-1035">Host cytoplasm</keyword>
<keyword id="KW-1048">Host nucleus</keyword>
<keyword id="KW-0945">Host-virus interaction</keyword>
<keyword id="KW-0479">Metal-binding</keyword>
<keyword id="KW-0553">Oncogene</keyword>
<keyword id="KW-0597">Phosphoprotein</keyword>
<keyword id="KW-0804">Transcription</keyword>
<keyword id="KW-0805">Transcription regulation</keyword>
<keyword id="KW-0862">Zinc</keyword>
<keyword id="KW-0863">Zinc-finger</keyword>
<name>ST_POVKI</name>
<organismHost>
    <name type="scientific">Homo sapiens</name>
    <name type="common">Human</name>
    <dbReference type="NCBI Taxonomy" id="9606"/>
</organismHost>
<comment type="function">
    <text evidence="1">Promotes efficient viral genome replication by accelerating both G1 and S phase progression of the cell cycle. Inhibits host PP2A by binding to the A subunit, thereby displacing lower affinity regulatory B subunit. Inactivation of PP2A in turn results in the transactivation of cyclin A and cyclin D1 promoters. Late during the infection cycle, ST may induce dephosphorylation of host MTOR, leading to the inhibition of cap-dependent translation. May establish and maintain high levels of viral genomes during persistent infection in cell culture.</text>
</comment>
<comment type="subunit">
    <text evidence="1">Interacts with host PPP2R1A; the interaction inhibits PP2A activity.</text>
</comment>
<comment type="subcellular location">
    <subcellularLocation>
        <location>Host cytoplasm</location>
    </subcellularLocation>
    <subcellularLocation>
        <location evidence="1">Host nucleus</location>
    </subcellularLocation>
</comment>
<comment type="alternative products">
    <event type="alternative splicing"/>
    <isoform>
        <id>P0DOI8-1</id>
        <id>A3R4N5-1</id>
        <name>Small t antigen</name>
        <sequence type="displayed"/>
    </isoform>
    <isoform>
        <id>P0DOI5-1</id>
        <id>A3R4N4-1</id>
        <name>Large T antigen</name>
        <sequence type="external"/>
    </isoform>
</comment>
<comment type="domain">
    <text evidence="1">The common region of ST and LT proteins comprises the J domain. This domain is essential for multiple viral activities, including virion assembly, viral DNA replication, transformation and transcriptional activation. This domain is also required for cyclin A-transactivating activity of ST.</text>
</comment>
<organism>
    <name type="scientific">KI polyomavirus (isolate Stockholm 350)</name>
    <name type="common">KIPyV</name>
    <dbReference type="NCBI Taxonomy" id="423447"/>
    <lineage>
        <taxon>Viruses</taxon>
        <taxon>Monodnaviria</taxon>
        <taxon>Shotokuvirae</taxon>
        <taxon>Cossaviricota</taxon>
        <taxon>Papovaviricetes</taxon>
        <taxon>Sepolyvirales</taxon>
        <taxon>Polyomaviridae</taxon>
        <taxon>Betapolyomavirus</taxon>
        <taxon>Betapolyomavirus tertihominis</taxon>
    </lineage>
</organism>